<proteinExistence type="inferred from homology"/>
<feature type="chain" id="PRO_1000015737" description="Elongation factor Tu">
    <location>
        <begin position="1"/>
        <end position="394"/>
    </location>
</feature>
<feature type="domain" description="tr-type G">
    <location>
        <begin position="10"/>
        <end position="204"/>
    </location>
</feature>
<feature type="region of interest" description="G1" evidence="1">
    <location>
        <begin position="19"/>
        <end position="26"/>
    </location>
</feature>
<feature type="region of interest" description="G2" evidence="1">
    <location>
        <begin position="60"/>
        <end position="64"/>
    </location>
</feature>
<feature type="region of interest" description="G3" evidence="1">
    <location>
        <begin position="81"/>
        <end position="84"/>
    </location>
</feature>
<feature type="region of interest" description="G4" evidence="1">
    <location>
        <begin position="136"/>
        <end position="139"/>
    </location>
</feature>
<feature type="region of interest" description="G5" evidence="1">
    <location>
        <begin position="174"/>
        <end position="176"/>
    </location>
</feature>
<feature type="binding site" evidence="2">
    <location>
        <begin position="19"/>
        <end position="26"/>
    </location>
    <ligand>
        <name>GTP</name>
        <dbReference type="ChEBI" id="CHEBI:37565"/>
    </ligand>
</feature>
<feature type="binding site" evidence="2">
    <location>
        <position position="26"/>
    </location>
    <ligand>
        <name>Mg(2+)</name>
        <dbReference type="ChEBI" id="CHEBI:18420"/>
    </ligand>
</feature>
<feature type="binding site" evidence="2">
    <location>
        <begin position="81"/>
        <end position="85"/>
    </location>
    <ligand>
        <name>GTP</name>
        <dbReference type="ChEBI" id="CHEBI:37565"/>
    </ligand>
</feature>
<feature type="binding site" evidence="2">
    <location>
        <begin position="136"/>
        <end position="139"/>
    </location>
    <ligand>
        <name>GTP</name>
        <dbReference type="ChEBI" id="CHEBI:37565"/>
    </ligand>
</feature>
<accession>A1T056</accession>
<dbReference type="EC" id="3.6.5.3" evidence="2"/>
<dbReference type="EMBL" id="CP000510">
    <property type="protein sequence ID" value="ABM05121.1"/>
    <property type="molecule type" value="Genomic_DNA"/>
</dbReference>
<dbReference type="RefSeq" id="WP_011771673.1">
    <property type="nucleotide sequence ID" value="NC_008709.1"/>
</dbReference>
<dbReference type="SMR" id="A1T056"/>
<dbReference type="STRING" id="357804.Ping_3437"/>
<dbReference type="KEGG" id="pin:Ping_3437"/>
<dbReference type="eggNOG" id="COG0050">
    <property type="taxonomic scope" value="Bacteria"/>
</dbReference>
<dbReference type="HOGENOM" id="CLU_007265_0_0_6"/>
<dbReference type="OrthoDB" id="9803139at2"/>
<dbReference type="Proteomes" id="UP000000639">
    <property type="component" value="Chromosome"/>
</dbReference>
<dbReference type="GO" id="GO:0005829">
    <property type="term" value="C:cytosol"/>
    <property type="evidence" value="ECO:0007669"/>
    <property type="project" value="TreeGrafter"/>
</dbReference>
<dbReference type="GO" id="GO:0005525">
    <property type="term" value="F:GTP binding"/>
    <property type="evidence" value="ECO:0007669"/>
    <property type="project" value="UniProtKB-UniRule"/>
</dbReference>
<dbReference type="GO" id="GO:0003924">
    <property type="term" value="F:GTPase activity"/>
    <property type="evidence" value="ECO:0007669"/>
    <property type="project" value="InterPro"/>
</dbReference>
<dbReference type="GO" id="GO:0097216">
    <property type="term" value="F:guanosine tetraphosphate binding"/>
    <property type="evidence" value="ECO:0007669"/>
    <property type="project" value="UniProtKB-ARBA"/>
</dbReference>
<dbReference type="GO" id="GO:0003746">
    <property type="term" value="F:translation elongation factor activity"/>
    <property type="evidence" value="ECO:0007669"/>
    <property type="project" value="UniProtKB-UniRule"/>
</dbReference>
<dbReference type="CDD" id="cd01884">
    <property type="entry name" value="EF_Tu"/>
    <property type="match status" value="1"/>
</dbReference>
<dbReference type="CDD" id="cd03697">
    <property type="entry name" value="EFTU_II"/>
    <property type="match status" value="1"/>
</dbReference>
<dbReference type="CDD" id="cd03707">
    <property type="entry name" value="EFTU_III"/>
    <property type="match status" value="1"/>
</dbReference>
<dbReference type="FunFam" id="2.40.30.10:FF:000001">
    <property type="entry name" value="Elongation factor Tu"/>
    <property type="match status" value="1"/>
</dbReference>
<dbReference type="FunFam" id="3.40.50.300:FF:000003">
    <property type="entry name" value="Elongation factor Tu"/>
    <property type="match status" value="1"/>
</dbReference>
<dbReference type="Gene3D" id="3.40.50.300">
    <property type="entry name" value="P-loop containing nucleotide triphosphate hydrolases"/>
    <property type="match status" value="1"/>
</dbReference>
<dbReference type="Gene3D" id="2.40.30.10">
    <property type="entry name" value="Translation factors"/>
    <property type="match status" value="2"/>
</dbReference>
<dbReference type="HAMAP" id="MF_00118_B">
    <property type="entry name" value="EF_Tu_B"/>
    <property type="match status" value="1"/>
</dbReference>
<dbReference type="InterPro" id="IPR041709">
    <property type="entry name" value="EF-Tu_GTP-bd"/>
</dbReference>
<dbReference type="InterPro" id="IPR050055">
    <property type="entry name" value="EF-Tu_GTPase"/>
</dbReference>
<dbReference type="InterPro" id="IPR004161">
    <property type="entry name" value="EFTu-like_2"/>
</dbReference>
<dbReference type="InterPro" id="IPR033720">
    <property type="entry name" value="EFTU_2"/>
</dbReference>
<dbReference type="InterPro" id="IPR031157">
    <property type="entry name" value="G_TR_CS"/>
</dbReference>
<dbReference type="InterPro" id="IPR027417">
    <property type="entry name" value="P-loop_NTPase"/>
</dbReference>
<dbReference type="InterPro" id="IPR005225">
    <property type="entry name" value="Small_GTP-bd"/>
</dbReference>
<dbReference type="InterPro" id="IPR000795">
    <property type="entry name" value="T_Tr_GTP-bd_dom"/>
</dbReference>
<dbReference type="InterPro" id="IPR009000">
    <property type="entry name" value="Transl_B-barrel_sf"/>
</dbReference>
<dbReference type="InterPro" id="IPR009001">
    <property type="entry name" value="Transl_elong_EF1A/Init_IF2_C"/>
</dbReference>
<dbReference type="InterPro" id="IPR004541">
    <property type="entry name" value="Transl_elong_EFTu/EF1A_bac/org"/>
</dbReference>
<dbReference type="InterPro" id="IPR004160">
    <property type="entry name" value="Transl_elong_EFTu/EF1A_C"/>
</dbReference>
<dbReference type="NCBIfam" id="TIGR00485">
    <property type="entry name" value="EF-Tu"/>
    <property type="match status" value="1"/>
</dbReference>
<dbReference type="NCBIfam" id="NF000766">
    <property type="entry name" value="PRK00049.1"/>
    <property type="match status" value="1"/>
</dbReference>
<dbReference type="NCBIfam" id="NF009372">
    <property type="entry name" value="PRK12735.1"/>
    <property type="match status" value="1"/>
</dbReference>
<dbReference type="NCBIfam" id="NF009373">
    <property type="entry name" value="PRK12736.1"/>
    <property type="match status" value="1"/>
</dbReference>
<dbReference type="NCBIfam" id="TIGR00231">
    <property type="entry name" value="small_GTP"/>
    <property type="match status" value="1"/>
</dbReference>
<dbReference type="PANTHER" id="PTHR43721:SF22">
    <property type="entry name" value="ELONGATION FACTOR TU, MITOCHONDRIAL"/>
    <property type="match status" value="1"/>
</dbReference>
<dbReference type="PANTHER" id="PTHR43721">
    <property type="entry name" value="ELONGATION FACTOR TU-RELATED"/>
    <property type="match status" value="1"/>
</dbReference>
<dbReference type="Pfam" id="PF00009">
    <property type="entry name" value="GTP_EFTU"/>
    <property type="match status" value="1"/>
</dbReference>
<dbReference type="Pfam" id="PF03144">
    <property type="entry name" value="GTP_EFTU_D2"/>
    <property type="match status" value="1"/>
</dbReference>
<dbReference type="Pfam" id="PF03143">
    <property type="entry name" value="GTP_EFTU_D3"/>
    <property type="match status" value="1"/>
</dbReference>
<dbReference type="PRINTS" id="PR00315">
    <property type="entry name" value="ELONGATNFCT"/>
</dbReference>
<dbReference type="SUPFAM" id="SSF50465">
    <property type="entry name" value="EF-Tu/eEF-1alpha/eIF2-gamma C-terminal domain"/>
    <property type="match status" value="1"/>
</dbReference>
<dbReference type="SUPFAM" id="SSF52540">
    <property type="entry name" value="P-loop containing nucleoside triphosphate hydrolases"/>
    <property type="match status" value="1"/>
</dbReference>
<dbReference type="SUPFAM" id="SSF50447">
    <property type="entry name" value="Translation proteins"/>
    <property type="match status" value="1"/>
</dbReference>
<dbReference type="PROSITE" id="PS00301">
    <property type="entry name" value="G_TR_1"/>
    <property type="match status" value="1"/>
</dbReference>
<dbReference type="PROSITE" id="PS51722">
    <property type="entry name" value="G_TR_2"/>
    <property type="match status" value="1"/>
</dbReference>
<protein>
    <recommendedName>
        <fullName evidence="2">Elongation factor Tu</fullName>
        <shortName evidence="2">EF-Tu</shortName>
        <ecNumber evidence="2">3.6.5.3</ecNumber>
    </recommendedName>
</protein>
<evidence type="ECO:0000250" key="1"/>
<evidence type="ECO:0000255" key="2">
    <source>
        <dbReference type="HAMAP-Rule" id="MF_00118"/>
    </source>
</evidence>
<gene>
    <name evidence="2" type="primary">tuf</name>
    <name type="ordered locus">Ping_3437</name>
</gene>
<reference key="1">
    <citation type="journal article" date="2008" name="BMC Genomics">
        <title>Genomics of an extreme psychrophile, Psychromonas ingrahamii.</title>
        <authorList>
            <person name="Riley M."/>
            <person name="Staley J.T."/>
            <person name="Danchin A."/>
            <person name="Wang T.Z."/>
            <person name="Brettin T.S."/>
            <person name="Hauser L.J."/>
            <person name="Land M.L."/>
            <person name="Thompson L.S."/>
        </authorList>
    </citation>
    <scope>NUCLEOTIDE SEQUENCE [LARGE SCALE GENOMIC DNA]</scope>
    <source>
        <strain>DSM 17664 / CCUG 51855 / 37</strain>
    </source>
</reference>
<name>EFTU_PSYIN</name>
<organism>
    <name type="scientific">Psychromonas ingrahamii (strain DSM 17664 / CCUG 51855 / 37)</name>
    <dbReference type="NCBI Taxonomy" id="357804"/>
    <lineage>
        <taxon>Bacteria</taxon>
        <taxon>Pseudomonadati</taxon>
        <taxon>Pseudomonadota</taxon>
        <taxon>Gammaproteobacteria</taxon>
        <taxon>Alteromonadales</taxon>
        <taxon>Psychromonadaceae</taxon>
        <taxon>Psychromonas</taxon>
    </lineage>
</organism>
<keyword id="KW-0963">Cytoplasm</keyword>
<keyword id="KW-0251">Elongation factor</keyword>
<keyword id="KW-0342">GTP-binding</keyword>
<keyword id="KW-0378">Hydrolase</keyword>
<keyword id="KW-0460">Magnesium</keyword>
<keyword id="KW-0479">Metal-binding</keyword>
<keyword id="KW-0547">Nucleotide-binding</keyword>
<keyword id="KW-0648">Protein biosynthesis</keyword>
<keyword id="KW-1185">Reference proteome</keyword>
<comment type="function">
    <text evidence="2">GTP hydrolase that promotes the GTP-dependent binding of aminoacyl-tRNA to the A-site of ribosomes during protein biosynthesis.</text>
</comment>
<comment type="catalytic activity">
    <reaction evidence="2">
        <text>GTP + H2O = GDP + phosphate + H(+)</text>
        <dbReference type="Rhea" id="RHEA:19669"/>
        <dbReference type="ChEBI" id="CHEBI:15377"/>
        <dbReference type="ChEBI" id="CHEBI:15378"/>
        <dbReference type="ChEBI" id="CHEBI:37565"/>
        <dbReference type="ChEBI" id="CHEBI:43474"/>
        <dbReference type="ChEBI" id="CHEBI:58189"/>
        <dbReference type="EC" id="3.6.5.3"/>
    </reaction>
    <physiologicalReaction direction="left-to-right" evidence="2">
        <dbReference type="Rhea" id="RHEA:19670"/>
    </physiologicalReaction>
</comment>
<comment type="subunit">
    <text evidence="2">Monomer.</text>
</comment>
<comment type="subcellular location">
    <subcellularLocation>
        <location evidence="2">Cytoplasm</location>
    </subcellularLocation>
</comment>
<comment type="similarity">
    <text evidence="2">Belongs to the TRAFAC class translation factor GTPase superfamily. Classic translation factor GTPase family. EF-Tu/EF-1A subfamily.</text>
</comment>
<sequence length="394" mass="43263">MSKAKFERKKPHLNVGTIGHVDHGKTTLTAAISAVLTKAHGGEVKDFASIDNAPEERERGITINTSHIEYDTDTRHYAHVDCPGHADYVKNMITGAAQMDAGILVVAATDGPMPQTREHILLSRQVGVPHLIVFMNKCDMVDDEELLELVEMEVRELLSEYDFPGDDLPVIQGSALKALEGDPVWEAKVMELADALDTYIPLPERDIDKPFILPIEDVFSIAGRGTVVTGRVERGIIKVGQEVEIIGLRPTVKTTCTGVEMFRKLLDEGRAGENVGILLRGTKRDDVERGQVLAKPGSIKPHTKFEGEVYILSKDEGGRHTPFFKGYRPQFFFRTTDITGAVELPEGVEMVMPGDNLKFVVDLIGPVAMDEGLRFAIREGGRTVGAGVVSKIIE</sequence>